<evidence type="ECO:0000255" key="1">
    <source>
        <dbReference type="PROSITE-ProRule" id="PRU00520"/>
    </source>
</evidence>
<evidence type="ECO:0000305" key="2"/>
<name>ACYP_MYCA1</name>
<keyword id="KW-0378">Hydrolase</keyword>
<proteinExistence type="inferred from homology"/>
<gene>
    <name type="primary">acyP</name>
    <name type="ordered locus">MAV_3779</name>
</gene>
<reference key="1">
    <citation type="submission" date="2006-10" db="EMBL/GenBank/DDBJ databases">
        <authorList>
            <person name="Fleischmann R.D."/>
            <person name="Dodson R.J."/>
            <person name="Haft D.H."/>
            <person name="Merkel J.S."/>
            <person name="Nelson W.C."/>
            <person name="Fraser C.M."/>
        </authorList>
    </citation>
    <scope>NUCLEOTIDE SEQUENCE [LARGE SCALE GENOMIC DNA]</scope>
    <source>
        <strain>104</strain>
    </source>
</reference>
<protein>
    <recommendedName>
        <fullName>Acylphosphatase</fullName>
        <ecNumber>3.6.1.7</ecNumber>
    </recommendedName>
    <alternativeName>
        <fullName>Acylphosphate phosphohydrolase</fullName>
    </alternativeName>
</protein>
<organism>
    <name type="scientific">Mycobacterium avium (strain 104)</name>
    <dbReference type="NCBI Taxonomy" id="243243"/>
    <lineage>
        <taxon>Bacteria</taxon>
        <taxon>Bacillati</taxon>
        <taxon>Actinomycetota</taxon>
        <taxon>Actinomycetes</taxon>
        <taxon>Mycobacteriales</taxon>
        <taxon>Mycobacteriaceae</taxon>
        <taxon>Mycobacterium</taxon>
        <taxon>Mycobacterium avium complex (MAC)</taxon>
    </lineage>
</organism>
<accession>A0QJ63</accession>
<dbReference type="EC" id="3.6.1.7"/>
<dbReference type="EMBL" id="CP000479">
    <property type="protein sequence ID" value="ABK69469.1"/>
    <property type="molecule type" value="Genomic_DNA"/>
</dbReference>
<dbReference type="RefSeq" id="WP_003875053.1">
    <property type="nucleotide sequence ID" value="NC_008595.1"/>
</dbReference>
<dbReference type="SMR" id="A0QJ63"/>
<dbReference type="KEGG" id="mav:MAV_3779"/>
<dbReference type="HOGENOM" id="CLU_141932_3_0_11"/>
<dbReference type="Proteomes" id="UP000001574">
    <property type="component" value="Chromosome"/>
</dbReference>
<dbReference type="GO" id="GO:0003998">
    <property type="term" value="F:acylphosphatase activity"/>
    <property type="evidence" value="ECO:0007669"/>
    <property type="project" value="UniProtKB-EC"/>
</dbReference>
<dbReference type="Gene3D" id="3.30.70.100">
    <property type="match status" value="1"/>
</dbReference>
<dbReference type="InterPro" id="IPR020456">
    <property type="entry name" value="Acylphosphatase"/>
</dbReference>
<dbReference type="InterPro" id="IPR001792">
    <property type="entry name" value="Acylphosphatase-like_dom"/>
</dbReference>
<dbReference type="InterPro" id="IPR036046">
    <property type="entry name" value="Acylphosphatase-like_dom_sf"/>
</dbReference>
<dbReference type="InterPro" id="IPR017968">
    <property type="entry name" value="Acylphosphatase_CS"/>
</dbReference>
<dbReference type="NCBIfam" id="NF010997">
    <property type="entry name" value="PRK14422.1"/>
    <property type="match status" value="1"/>
</dbReference>
<dbReference type="PANTHER" id="PTHR47268">
    <property type="entry name" value="ACYLPHOSPHATASE"/>
    <property type="match status" value="1"/>
</dbReference>
<dbReference type="PANTHER" id="PTHR47268:SF4">
    <property type="entry name" value="ACYLPHOSPHATASE"/>
    <property type="match status" value="1"/>
</dbReference>
<dbReference type="Pfam" id="PF00708">
    <property type="entry name" value="Acylphosphatase"/>
    <property type="match status" value="1"/>
</dbReference>
<dbReference type="SUPFAM" id="SSF54975">
    <property type="entry name" value="Acylphosphatase/BLUF domain-like"/>
    <property type="match status" value="1"/>
</dbReference>
<dbReference type="PROSITE" id="PS00150">
    <property type="entry name" value="ACYLPHOSPHATASE_1"/>
    <property type="match status" value="1"/>
</dbReference>
<dbReference type="PROSITE" id="PS00151">
    <property type="entry name" value="ACYLPHOSPHATASE_2"/>
    <property type="match status" value="1"/>
</dbReference>
<dbReference type="PROSITE" id="PS51160">
    <property type="entry name" value="ACYLPHOSPHATASE_3"/>
    <property type="match status" value="1"/>
</dbReference>
<sequence>MPEPDARLTAWVHGHVQGVGFRWWTRCRALELGLTGYAANQPDGRVLVVAQGPRPAGEKLLELLRGGTTWPSRPGRVDKVVADWSAPQERFEGFVER</sequence>
<feature type="chain" id="PRO_0000326747" description="Acylphosphatase">
    <location>
        <begin position="1"/>
        <end position="97"/>
    </location>
</feature>
<feature type="domain" description="Acylphosphatase-like" evidence="1">
    <location>
        <begin position="7"/>
        <end position="97"/>
    </location>
</feature>
<feature type="active site" evidence="1">
    <location>
        <position position="22"/>
    </location>
</feature>
<feature type="active site" evidence="1">
    <location>
        <position position="40"/>
    </location>
</feature>
<comment type="catalytic activity">
    <reaction>
        <text>an acyl phosphate + H2O = a carboxylate + phosphate + H(+)</text>
        <dbReference type="Rhea" id="RHEA:14965"/>
        <dbReference type="ChEBI" id="CHEBI:15377"/>
        <dbReference type="ChEBI" id="CHEBI:15378"/>
        <dbReference type="ChEBI" id="CHEBI:29067"/>
        <dbReference type="ChEBI" id="CHEBI:43474"/>
        <dbReference type="ChEBI" id="CHEBI:59918"/>
        <dbReference type="EC" id="3.6.1.7"/>
    </reaction>
</comment>
<comment type="similarity">
    <text evidence="2">Belongs to the acylphosphatase family.</text>
</comment>